<keyword id="KW-0997">Cell inner membrane</keyword>
<keyword id="KW-1003">Cell membrane</keyword>
<keyword id="KW-0472">Membrane</keyword>
<keyword id="KW-0592">Phosphate transport</keyword>
<keyword id="KW-1185">Reference proteome</keyword>
<keyword id="KW-0812">Transmembrane</keyword>
<keyword id="KW-1133">Transmembrane helix</keyword>
<keyword id="KW-0813">Transport</keyword>
<comment type="function">
    <text>Potential transporter for phosphate.</text>
</comment>
<comment type="subcellular location">
    <subcellularLocation>
        <location evidence="2">Cell inner membrane</location>
        <topology evidence="2">Multi-pass membrane protein</topology>
    </subcellularLocation>
</comment>
<comment type="similarity">
    <text evidence="2">Belongs to the inorganic phosphate transporter (PiT) (TC 2.A.20) family.</text>
</comment>
<name>Y1604_HAEIN</name>
<protein>
    <recommendedName>
        <fullName>Putative phosphate permease HI_1604</fullName>
    </recommendedName>
</protein>
<feature type="chain" id="PRO_0000080798" description="Putative phosphate permease HI_1604">
    <location>
        <begin position="1"/>
        <end position="420"/>
    </location>
</feature>
<feature type="transmembrane region" description="Helical" evidence="1">
    <location>
        <begin position="8"/>
        <end position="28"/>
    </location>
</feature>
<feature type="transmembrane region" description="Helical" evidence="1">
    <location>
        <begin position="49"/>
        <end position="69"/>
    </location>
</feature>
<feature type="transmembrane region" description="Helical" evidence="1">
    <location>
        <begin position="88"/>
        <end position="108"/>
    </location>
</feature>
<feature type="transmembrane region" description="Helical" evidence="1">
    <location>
        <begin position="112"/>
        <end position="132"/>
    </location>
</feature>
<feature type="transmembrane region" description="Helical" evidence="1">
    <location>
        <begin position="145"/>
        <end position="165"/>
    </location>
</feature>
<feature type="transmembrane region" description="Helical" evidence="1">
    <location>
        <begin position="185"/>
        <end position="205"/>
    </location>
</feature>
<feature type="transmembrane region" description="Helical" evidence="1">
    <location>
        <begin position="216"/>
        <end position="236"/>
    </location>
</feature>
<feature type="transmembrane region" description="Helical" evidence="1">
    <location>
        <begin position="250"/>
        <end position="270"/>
    </location>
</feature>
<feature type="transmembrane region" description="Helical" evidence="1">
    <location>
        <begin position="300"/>
        <end position="320"/>
    </location>
</feature>
<feature type="transmembrane region" description="Helical" evidence="1">
    <location>
        <begin position="343"/>
        <end position="363"/>
    </location>
</feature>
<feature type="transmembrane region" description="Helical" evidence="1">
    <location>
        <begin position="370"/>
        <end position="390"/>
    </location>
</feature>
<feature type="transmembrane region" description="Helical" evidence="1">
    <location>
        <begin position="393"/>
        <end position="413"/>
    </location>
</feature>
<sequence>MEIISQYGSWLVWITAVFGFFMAFGIGANDVSNSMGTSVGSGTITAKQAIIIALIFESAGAYLAGGEVTQTIKSGVIEPIQFVDTPDILALGMLSTLFASGAWLFIATKMGWPVSGTHTIIGAIIGFACITIGPSSVDWSKIGSIVGSWFVTPVIAGILAYAIFASTQKLIFDTEQPLKNAQKYGPYYMGITVFVLCIVTMKKGLKHVGLNLSNSETLIISLAISLIGMFFFHFYFKSKIFTQSANKGTFGAVEKVFSILMLLTACAMAFAHGSNDVANAIGPLSAVVSIVNEGGKIVSGGALTWWILPLGALGIAVGLITMGQKVMATVGSGITDLTPSRGFAAQFATAMTVVVASGTGLPISTTQTLVGAILGIGFARGIAALNLTVIRNIISSWIVTLPAGAFFAIIIFYVLRTIFN</sequence>
<gene>
    <name type="ordered locus">HI_1604</name>
</gene>
<reference key="1">
    <citation type="journal article" date="1995" name="Science">
        <title>Whole-genome random sequencing and assembly of Haemophilus influenzae Rd.</title>
        <authorList>
            <person name="Fleischmann R.D."/>
            <person name="Adams M.D."/>
            <person name="White O."/>
            <person name="Clayton R.A."/>
            <person name="Kirkness E.F."/>
            <person name="Kerlavage A.R."/>
            <person name="Bult C.J."/>
            <person name="Tomb J.-F."/>
            <person name="Dougherty B.A."/>
            <person name="Merrick J.M."/>
            <person name="McKenney K."/>
            <person name="Sutton G.G."/>
            <person name="FitzHugh W."/>
            <person name="Fields C.A."/>
            <person name="Gocayne J.D."/>
            <person name="Scott J.D."/>
            <person name="Shirley R."/>
            <person name="Liu L.-I."/>
            <person name="Glodek A."/>
            <person name="Kelley J.M."/>
            <person name="Weidman J.F."/>
            <person name="Phillips C.A."/>
            <person name="Spriggs T."/>
            <person name="Hedblom E."/>
            <person name="Cotton M.D."/>
            <person name="Utterback T.R."/>
            <person name="Hanna M.C."/>
            <person name="Nguyen D.T."/>
            <person name="Saudek D.M."/>
            <person name="Brandon R.C."/>
            <person name="Fine L.D."/>
            <person name="Fritchman J.L."/>
            <person name="Fuhrmann J.L."/>
            <person name="Geoghagen N.S.M."/>
            <person name="Gnehm C.L."/>
            <person name="McDonald L.A."/>
            <person name="Small K.V."/>
            <person name="Fraser C.M."/>
            <person name="Smith H.O."/>
            <person name="Venter J.C."/>
        </authorList>
    </citation>
    <scope>NUCLEOTIDE SEQUENCE [LARGE SCALE GENOMIC DNA]</scope>
    <source>
        <strain>ATCC 51907 / DSM 11121 / KW20 / Rd</strain>
    </source>
</reference>
<accession>P45268</accession>
<evidence type="ECO:0000255" key="1"/>
<evidence type="ECO:0000305" key="2"/>
<organism>
    <name type="scientific">Haemophilus influenzae (strain ATCC 51907 / DSM 11121 / KW20 / Rd)</name>
    <dbReference type="NCBI Taxonomy" id="71421"/>
    <lineage>
        <taxon>Bacteria</taxon>
        <taxon>Pseudomonadati</taxon>
        <taxon>Pseudomonadota</taxon>
        <taxon>Gammaproteobacteria</taxon>
        <taxon>Pasteurellales</taxon>
        <taxon>Pasteurellaceae</taxon>
        <taxon>Haemophilus</taxon>
    </lineage>
</organism>
<proteinExistence type="inferred from homology"/>
<dbReference type="EMBL" id="L42023">
    <property type="protein sequence ID" value="AAC23248.1"/>
    <property type="molecule type" value="Genomic_DNA"/>
</dbReference>
<dbReference type="PIR" id="A64132">
    <property type="entry name" value="A64132"/>
</dbReference>
<dbReference type="RefSeq" id="NP_439746.1">
    <property type="nucleotide sequence ID" value="NC_000907.1"/>
</dbReference>
<dbReference type="SMR" id="P45268"/>
<dbReference type="STRING" id="71421.HI_1604"/>
<dbReference type="EnsemblBacteria" id="AAC23248">
    <property type="protein sequence ID" value="AAC23248"/>
    <property type="gene ID" value="HI_1604"/>
</dbReference>
<dbReference type="KEGG" id="hin:HI_1604"/>
<dbReference type="PATRIC" id="fig|71421.8.peg.1677"/>
<dbReference type="eggNOG" id="COG0306">
    <property type="taxonomic scope" value="Bacteria"/>
</dbReference>
<dbReference type="HOGENOM" id="CLU_015355_3_3_6"/>
<dbReference type="OrthoDB" id="9779554at2"/>
<dbReference type="PhylomeDB" id="P45268"/>
<dbReference type="BioCyc" id="HINF71421:G1GJ1-1617-MONOMER"/>
<dbReference type="Proteomes" id="UP000000579">
    <property type="component" value="Chromosome"/>
</dbReference>
<dbReference type="GO" id="GO:0005886">
    <property type="term" value="C:plasma membrane"/>
    <property type="evidence" value="ECO:0007669"/>
    <property type="project" value="UniProtKB-SubCell"/>
</dbReference>
<dbReference type="GO" id="GO:0005315">
    <property type="term" value="F:phosphate transmembrane transporter activity"/>
    <property type="evidence" value="ECO:0000318"/>
    <property type="project" value="GO_Central"/>
</dbReference>
<dbReference type="GO" id="GO:0035435">
    <property type="term" value="P:phosphate ion transmembrane transport"/>
    <property type="evidence" value="ECO:0000318"/>
    <property type="project" value="GO_Central"/>
</dbReference>
<dbReference type="InterPro" id="IPR001204">
    <property type="entry name" value="Phos_transporter"/>
</dbReference>
<dbReference type="PANTHER" id="PTHR11101">
    <property type="entry name" value="PHOSPHATE TRANSPORTER"/>
    <property type="match status" value="1"/>
</dbReference>
<dbReference type="PANTHER" id="PTHR11101:SF80">
    <property type="entry name" value="PHOSPHATE TRANSPORTER"/>
    <property type="match status" value="1"/>
</dbReference>
<dbReference type="Pfam" id="PF01384">
    <property type="entry name" value="PHO4"/>
    <property type="match status" value="1"/>
</dbReference>